<evidence type="ECO:0000250" key="1"/>
<evidence type="ECO:0000269" key="2">
    <source>
    </source>
</evidence>
<evidence type="ECO:0000269" key="3">
    <source>
    </source>
</evidence>
<evidence type="ECO:0000269" key="4">
    <source ref="4"/>
</evidence>
<evidence type="ECO:0000305" key="5"/>
<evidence type="ECO:0007744" key="6">
    <source>
    </source>
</evidence>
<evidence type="ECO:0007744" key="7">
    <source>
    </source>
</evidence>
<evidence type="ECO:0007744" key="8">
    <source>
    </source>
</evidence>
<evidence type="ECO:0007744" key="9">
    <source>
    </source>
</evidence>
<proteinExistence type="evidence at protein level"/>
<comment type="catalytic activity">
    <reaction>
        <text>(2R)-2-phosphoglycerate = phosphoenolpyruvate + H2O</text>
        <dbReference type="Rhea" id="RHEA:10164"/>
        <dbReference type="ChEBI" id="CHEBI:15377"/>
        <dbReference type="ChEBI" id="CHEBI:58289"/>
        <dbReference type="ChEBI" id="CHEBI:58702"/>
        <dbReference type="EC" id="4.2.1.11"/>
    </reaction>
</comment>
<comment type="cofactor">
    <cofactor>
        <name>Mg(2+)</name>
        <dbReference type="ChEBI" id="CHEBI:18420"/>
    </cofactor>
    <text>Mg(2+) is required for catalysis and for stabilizing the dimer.</text>
</comment>
<comment type="pathway">
    <text>Carbohydrate degradation; glycolysis; pyruvate from D-glyceraldehyde 3-phosphate: step 4/5.</text>
</comment>
<comment type="subunit">
    <text>Homodimer.</text>
</comment>
<comment type="interaction">
    <interactant intactId="EBI-6475">
        <id>P00925</id>
    </interactant>
    <interactant intactId="EBI-4347">
        <id>P21269</id>
        <label>CCA1</label>
    </interactant>
    <organismsDiffer>false</organismsDiffer>
    <experiments>2</experiments>
</comment>
<comment type="interaction">
    <interactant intactId="EBI-6475">
        <id>P00925</id>
    </interactant>
    <interactant intactId="EBI-16219">
        <id>P39940</id>
        <label>RSP5</label>
    </interactant>
    <organismsDiffer>false</organismsDiffer>
    <experiments>2</experiments>
</comment>
<comment type="subcellular location">
    <subcellularLocation>
        <location>Cytoplasm</location>
    </subcellularLocation>
</comment>
<comment type="miscellaneous">
    <text evidence="2">Present with 2610 molecules/cell in log phase SD medium.</text>
</comment>
<comment type="similarity">
    <text evidence="5">Belongs to the enolase family.</text>
</comment>
<gene>
    <name type="primary">ENO2</name>
    <name type="synonym">ENOB</name>
    <name type="ordered locus">YHR174W</name>
</gene>
<name>ENO2_YEAST</name>
<sequence length="437" mass="46914">MAVSKVYARSVYDSRGNPTVEVELTTEKGVFRSIVPSGASTGVHEALEMRDEDKSKWMGKGVMNAVNNVNNVIAAAFVKANLDVKDQKAVDDFLLSLDGTANKSKLGANAILGVSMAAARAAAAEKNVPLYQHLADLSKSKTSPYVLPVPFLNVLNGGSHAGGALALQEFMIAPTGAKTFAEAMRIGSEVYHNLKSLTKKRYGASAGNVGDEGGVAPNIQTAEEALDLIVDAIKAAGHDGKVKIGLDCASSEFFKDGKYDLDFKNPESDKSKWLTGVELADMYHSLMKRYPIVSIEDPFAEDDWEAWSHFFKTAGIQIVADDLTVTNPARIATAIEKKAADALLLKVNQIGTLSESIKAAQDSFAANWGVMVSHRSGETEDTFIADLVVGLRTGQIKTGAPARSERLAKLNQLLRIEEELGDKAVYAGENFHHGDKL</sequence>
<reference key="1">
    <citation type="journal article" date="1981" name="J. Biol. Chem.">
        <title>The primary structures of two yeast enolase genes. Homology between the 5' noncoding flanking regions of yeast enolase and glyceraldehyde-3-phosphate dehydrogenase genes.</title>
        <authorList>
            <person name="Holland M.J."/>
            <person name="Holland J.P."/>
            <person name="Thill G.P."/>
            <person name="Jackson K.A."/>
        </authorList>
    </citation>
    <scope>NUCLEOTIDE SEQUENCE [GENOMIC DNA]</scope>
</reference>
<reference key="2">
    <citation type="journal article" date="1994" name="Science">
        <title>Complete nucleotide sequence of Saccharomyces cerevisiae chromosome VIII.</title>
        <authorList>
            <person name="Johnston M."/>
            <person name="Andrews S."/>
            <person name="Brinkman R."/>
            <person name="Cooper J."/>
            <person name="Ding H."/>
            <person name="Dover J."/>
            <person name="Du Z."/>
            <person name="Favello A."/>
            <person name="Fulton L."/>
            <person name="Gattung S."/>
            <person name="Geisel C."/>
            <person name="Kirsten J."/>
            <person name="Kucaba T."/>
            <person name="Hillier L.W."/>
            <person name="Jier M."/>
            <person name="Johnston L."/>
            <person name="Langston Y."/>
            <person name="Latreille P."/>
            <person name="Louis E.J."/>
            <person name="Macri C."/>
            <person name="Mardis E."/>
            <person name="Menezes S."/>
            <person name="Mouser L."/>
            <person name="Nhan M."/>
            <person name="Rifkin L."/>
            <person name="Riles L."/>
            <person name="St Peter H."/>
            <person name="Trevaskis E."/>
            <person name="Vaughan K."/>
            <person name="Vignati D."/>
            <person name="Wilcox L."/>
            <person name="Wohldman P."/>
            <person name="Waterston R."/>
            <person name="Wilson R."/>
            <person name="Vaudin M."/>
        </authorList>
    </citation>
    <scope>NUCLEOTIDE SEQUENCE [LARGE SCALE GENOMIC DNA]</scope>
    <source>
        <strain>ATCC 204508 / S288c</strain>
    </source>
</reference>
<reference key="3">
    <citation type="journal article" date="2014" name="G3 (Bethesda)">
        <title>The reference genome sequence of Saccharomyces cerevisiae: Then and now.</title>
        <authorList>
            <person name="Engel S.R."/>
            <person name="Dietrich F.S."/>
            <person name="Fisk D.G."/>
            <person name="Binkley G."/>
            <person name="Balakrishnan R."/>
            <person name="Costanzo M.C."/>
            <person name="Dwight S.S."/>
            <person name="Hitz B.C."/>
            <person name="Karra K."/>
            <person name="Nash R.S."/>
            <person name="Weng S."/>
            <person name="Wong E.D."/>
            <person name="Lloyd P."/>
            <person name="Skrzypek M.S."/>
            <person name="Miyasato S.R."/>
            <person name="Simison M."/>
            <person name="Cherry J.M."/>
        </authorList>
    </citation>
    <scope>GENOME REANNOTATION</scope>
    <source>
        <strain>ATCC 204508 / S288c</strain>
    </source>
</reference>
<reference key="4">
    <citation type="submission" date="1995-08" db="UniProtKB">
        <authorList>
            <person name="Sanchez J.-C."/>
            <person name="Golaz O."/>
            <person name="Schaller D."/>
            <person name="Morch F."/>
            <person name="Frutiger S."/>
            <person name="Hughes G.J."/>
            <person name="Appel R.D."/>
            <person name="Deshusses J."/>
            <person name="Hochstrasser D.F."/>
        </authorList>
    </citation>
    <scope>PROTEIN SEQUENCE OF 2-12</scope>
    <source>
        <strain>ATCC 26786 / X2180-1A</strain>
    </source>
</reference>
<reference key="5">
    <citation type="journal article" date="1996" name="FEMS Microbiol. Lett.">
        <title>Protein expression during exponential growth in 0.7 M NaCl medium of Saccharomyces cerevisiae.</title>
        <authorList>
            <person name="Norbeck J."/>
            <person name="Blomberg A."/>
        </authorList>
    </citation>
    <scope>PROTEIN SEQUENCE OF 2-21</scope>
    <source>
        <strain>ATCC 38531 / Y41</strain>
    </source>
</reference>
<reference key="6">
    <citation type="journal article" date="1995" name="Electrophoresis">
        <title>Gene linkage of two-dimensional polyacrylamide gel electrophoresis resolved proteins from isogene families in Saccharomyces cerevisiae by microsequencing of in-gel trypsin generated peptides.</title>
        <authorList>
            <person name="Norbeck J."/>
            <person name="Blomberg A."/>
        </authorList>
    </citation>
    <scope>PROTEIN SEQUENCE OF 16-24; 57-60; 89-103; 290-298 AND 424-432</scope>
    <source>
        <strain>ATCC 38531 / Y41</strain>
    </source>
</reference>
<reference key="7">
    <citation type="journal article" date="1994" name="Electrophoresis">
        <title>Protein identifications for a Saccharomyces cerevisiae protein database.</title>
        <authorList>
            <person name="Garrels J.I."/>
            <person name="Futcher B."/>
            <person name="Kobayashi R."/>
            <person name="Latter G.I."/>
            <person name="Schwender B."/>
            <person name="Volpe T."/>
            <person name="Warner J.R."/>
            <person name="McLaughlin C.S."/>
        </authorList>
    </citation>
    <scope>PROTEIN SEQUENCE OF 127-139 AND 244-255</scope>
    <source>
        <strain>ATCC 204508 / S288c</strain>
    </source>
</reference>
<reference key="8">
    <citation type="journal article" date="2003" name="Nature">
        <title>Global analysis of protein expression in yeast.</title>
        <authorList>
            <person name="Ghaemmaghami S."/>
            <person name="Huh W.-K."/>
            <person name="Bower K."/>
            <person name="Howson R.W."/>
            <person name="Belle A."/>
            <person name="Dephoure N."/>
            <person name="O'Shea E.K."/>
            <person name="Weissman J.S."/>
        </authorList>
    </citation>
    <scope>LEVEL OF PROTEIN EXPRESSION [LARGE SCALE ANALYSIS]</scope>
</reference>
<reference key="9">
    <citation type="journal article" date="2007" name="Proc. Natl. Acad. Sci. U.S.A.">
        <title>Analysis of phosphorylation sites on proteins from Saccharomyces cerevisiae by electron transfer dissociation (ETD) mass spectrometry.</title>
        <authorList>
            <person name="Chi A."/>
            <person name="Huttenhower C."/>
            <person name="Geer L.Y."/>
            <person name="Coon J.J."/>
            <person name="Syka J.E.P."/>
            <person name="Bai D.L."/>
            <person name="Shabanowitz J."/>
            <person name="Burke D.J."/>
            <person name="Troyanskaya O.G."/>
            <person name="Hunt D.F."/>
        </authorList>
    </citation>
    <scope>PHOSPHORYLATION [LARGE SCALE ANALYSIS] AT SER-188</scope>
    <scope>IDENTIFICATION BY MASS SPECTROMETRY [LARGE SCALE ANALYSIS]</scope>
</reference>
<reference key="10">
    <citation type="journal article" date="2008" name="Mol. Cell. Proteomics">
        <title>A multidimensional chromatography technology for in-depth phosphoproteome analysis.</title>
        <authorList>
            <person name="Albuquerque C.P."/>
            <person name="Smolka M.B."/>
            <person name="Payne S.H."/>
            <person name="Bafna V."/>
            <person name="Eng J."/>
            <person name="Zhou H."/>
        </authorList>
    </citation>
    <scope>PHOSPHORYLATION [LARGE SCALE ANALYSIS] AT THR-324</scope>
    <scope>IDENTIFICATION BY MASS SPECTROMETRY [LARGE SCALE ANALYSIS]</scope>
</reference>
<reference key="11">
    <citation type="journal article" date="2009" name="Science">
        <title>Global analysis of Cdk1 substrate phosphorylation sites provides insights into evolution.</title>
        <authorList>
            <person name="Holt L.J."/>
            <person name="Tuch B.B."/>
            <person name="Villen J."/>
            <person name="Johnson A.D."/>
            <person name="Gygi S.P."/>
            <person name="Morgan D.O."/>
        </authorList>
    </citation>
    <scope>PHOSPHORYLATION [LARGE SCALE ANALYSIS] AT SER-138 AND THR-313</scope>
    <scope>IDENTIFICATION BY MASS SPECTROMETRY [LARGE SCALE ANALYSIS]</scope>
</reference>
<reference key="12">
    <citation type="journal article" date="2012" name="Proteomics">
        <title>Sites of ubiquitin attachment in Saccharomyces cerevisiae.</title>
        <authorList>
            <person name="Starita L.M."/>
            <person name="Lo R.S."/>
            <person name="Eng J.K."/>
            <person name="von Haller P.D."/>
            <person name="Fields S."/>
        </authorList>
    </citation>
    <scope>UBIQUITINATION [LARGE SCALE ANALYSIS] AT LYS-60; LYS-243 AND LYS-358</scope>
    <scope>IDENTIFICATION BY MASS SPECTROMETRY [LARGE SCALE ANALYSIS]</scope>
</reference>
<accession>P00925</accession>
<accession>D3DLC2</accession>
<accession>P99013</accession>
<organism>
    <name type="scientific">Saccharomyces cerevisiae (strain ATCC 204508 / S288c)</name>
    <name type="common">Baker's yeast</name>
    <dbReference type="NCBI Taxonomy" id="559292"/>
    <lineage>
        <taxon>Eukaryota</taxon>
        <taxon>Fungi</taxon>
        <taxon>Dikarya</taxon>
        <taxon>Ascomycota</taxon>
        <taxon>Saccharomycotina</taxon>
        <taxon>Saccharomycetes</taxon>
        <taxon>Saccharomycetales</taxon>
        <taxon>Saccharomycetaceae</taxon>
        <taxon>Saccharomyces</taxon>
    </lineage>
</organism>
<keyword id="KW-0963">Cytoplasm</keyword>
<keyword id="KW-0903">Direct protein sequencing</keyword>
<keyword id="KW-0324">Glycolysis</keyword>
<keyword id="KW-1017">Isopeptide bond</keyword>
<keyword id="KW-0456">Lyase</keyword>
<keyword id="KW-0460">Magnesium</keyword>
<keyword id="KW-0479">Metal-binding</keyword>
<keyword id="KW-0597">Phosphoprotein</keyword>
<keyword id="KW-1185">Reference proteome</keyword>
<keyword id="KW-0832">Ubl conjugation</keyword>
<dbReference type="EC" id="4.2.1.11"/>
<dbReference type="EMBL" id="J01323">
    <property type="protein sequence ID" value="AAA88713.1"/>
    <property type="molecule type" value="Genomic_DNA"/>
</dbReference>
<dbReference type="EMBL" id="U00027">
    <property type="protein sequence ID" value="AAB68019.1"/>
    <property type="molecule type" value="Genomic_DNA"/>
</dbReference>
<dbReference type="EMBL" id="BK006934">
    <property type="protein sequence ID" value="DAA06866.1"/>
    <property type="molecule type" value="Genomic_DNA"/>
</dbReference>
<dbReference type="PIR" id="A01148">
    <property type="entry name" value="NOBY2"/>
</dbReference>
<dbReference type="RefSeq" id="NP_012044.1">
    <property type="nucleotide sequence ID" value="NM_001179305.1"/>
</dbReference>
<dbReference type="SMR" id="P00925"/>
<dbReference type="BioGRID" id="36607">
    <property type="interactions" value="297"/>
</dbReference>
<dbReference type="DIP" id="DIP-4777N"/>
<dbReference type="FunCoup" id="P00925">
    <property type="interactions" value="1206"/>
</dbReference>
<dbReference type="IntAct" id="P00925">
    <property type="interactions" value="119"/>
</dbReference>
<dbReference type="MINT" id="P00925"/>
<dbReference type="STRING" id="4932.YHR174W"/>
<dbReference type="MoonDB" id="P00925">
    <property type="type" value="Curated"/>
</dbReference>
<dbReference type="MoonProt" id="P00925"/>
<dbReference type="iPTMnet" id="P00925"/>
<dbReference type="PaxDb" id="4932-YHR174W"/>
<dbReference type="PeptideAtlas" id="P00925"/>
<dbReference type="TopDownProteomics" id="P00925"/>
<dbReference type="EnsemblFungi" id="YHR174W_mRNA">
    <property type="protein sequence ID" value="YHR174W"/>
    <property type="gene ID" value="YHR174W"/>
</dbReference>
<dbReference type="GeneID" id="856579"/>
<dbReference type="KEGG" id="sce:YHR174W"/>
<dbReference type="AGR" id="SGD:S000001217"/>
<dbReference type="SGD" id="S000001217">
    <property type="gene designation" value="ENO2"/>
</dbReference>
<dbReference type="VEuPathDB" id="FungiDB:YHR174W"/>
<dbReference type="eggNOG" id="KOG2670">
    <property type="taxonomic scope" value="Eukaryota"/>
</dbReference>
<dbReference type="GeneTree" id="ENSGT00950000182805"/>
<dbReference type="HOGENOM" id="CLU_031223_0_0_1"/>
<dbReference type="InParanoid" id="P00925"/>
<dbReference type="OMA" id="RCQLTGD"/>
<dbReference type="OrthoDB" id="1739814at2759"/>
<dbReference type="BioCyc" id="MetaCyc:YHR174W-MONOMER"/>
<dbReference type="BioCyc" id="YEAST:YHR174W-MONOMER"/>
<dbReference type="BRENDA" id="4.2.1.11">
    <property type="organism ID" value="984"/>
</dbReference>
<dbReference type="Reactome" id="R-SCE-70171">
    <property type="pathway name" value="Glycolysis"/>
</dbReference>
<dbReference type="Reactome" id="R-SCE-70263">
    <property type="pathway name" value="Gluconeogenesis"/>
</dbReference>
<dbReference type="SABIO-RK" id="P00925"/>
<dbReference type="UniPathway" id="UPA00109">
    <property type="reaction ID" value="UER00187"/>
</dbReference>
<dbReference type="BioGRID-ORCS" id="856579">
    <property type="hits" value="0 hits in 10 CRISPR screens"/>
</dbReference>
<dbReference type="CD-CODE" id="0F56F502">
    <property type="entry name" value="G-body"/>
</dbReference>
<dbReference type="PRO" id="PR:P00925"/>
<dbReference type="Proteomes" id="UP000002311">
    <property type="component" value="Chromosome VIII"/>
</dbReference>
<dbReference type="RNAct" id="P00925">
    <property type="molecule type" value="protein"/>
</dbReference>
<dbReference type="GO" id="GO:0009898">
    <property type="term" value="C:cytoplasmic side of plasma membrane"/>
    <property type="evidence" value="ECO:0000314"/>
    <property type="project" value="SGD"/>
</dbReference>
<dbReference type="GO" id="GO:0005829">
    <property type="term" value="C:cytosol"/>
    <property type="evidence" value="ECO:0007005"/>
    <property type="project" value="SGD"/>
</dbReference>
<dbReference type="GO" id="GO:0000324">
    <property type="term" value="C:fungal-type vacuole"/>
    <property type="evidence" value="ECO:0000314"/>
    <property type="project" value="SGD"/>
</dbReference>
<dbReference type="GO" id="GO:0005739">
    <property type="term" value="C:mitochondrion"/>
    <property type="evidence" value="ECO:0000314"/>
    <property type="project" value="SGD"/>
</dbReference>
<dbReference type="GO" id="GO:0000015">
    <property type="term" value="C:phosphopyruvate hydratase complex"/>
    <property type="evidence" value="ECO:0000314"/>
    <property type="project" value="SGD"/>
</dbReference>
<dbReference type="GO" id="GO:0005886">
    <property type="term" value="C:plasma membrane"/>
    <property type="evidence" value="ECO:0007005"/>
    <property type="project" value="SGD"/>
</dbReference>
<dbReference type="GO" id="GO:0000287">
    <property type="term" value="F:magnesium ion binding"/>
    <property type="evidence" value="ECO:0007669"/>
    <property type="project" value="InterPro"/>
</dbReference>
<dbReference type="GO" id="GO:1904408">
    <property type="term" value="F:melatonin binding"/>
    <property type="evidence" value="ECO:0000314"/>
    <property type="project" value="SGD"/>
</dbReference>
<dbReference type="GO" id="GO:0004634">
    <property type="term" value="F:phosphopyruvate hydratase activity"/>
    <property type="evidence" value="ECO:0000315"/>
    <property type="project" value="SGD"/>
</dbReference>
<dbReference type="GO" id="GO:0006096">
    <property type="term" value="P:glycolytic process"/>
    <property type="evidence" value="ECO:0000315"/>
    <property type="project" value="SGD"/>
</dbReference>
<dbReference type="GO" id="GO:0032889">
    <property type="term" value="P:regulation of vacuole fusion, non-autophagic"/>
    <property type="evidence" value="ECO:0000314"/>
    <property type="project" value="SGD"/>
</dbReference>
<dbReference type="CDD" id="cd03313">
    <property type="entry name" value="enolase"/>
    <property type="match status" value="1"/>
</dbReference>
<dbReference type="FunFam" id="3.30.390.10:FF:000001">
    <property type="entry name" value="Enolase"/>
    <property type="match status" value="1"/>
</dbReference>
<dbReference type="FunFam" id="3.20.20.120:FF:000002">
    <property type="entry name" value="Enolase 1"/>
    <property type="match status" value="1"/>
</dbReference>
<dbReference type="Gene3D" id="3.20.20.120">
    <property type="entry name" value="Enolase-like C-terminal domain"/>
    <property type="match status" value="1"/>
</dbReference>
<dbReference type="Gene3D" id="3.30.390.10">
    <property type="entry name" value="Enolase-like, N-terminal domain"/>
    <property type="match status" value="1"/>
</dbReference>
<dbReference type="HAMAP" id="MF_00318">
    <property type="entry name" value="Enolase"/>
    <property type="match status" value="1"/>
</dbReference>
<dbReference type="InterPro" id="IPR000941">
    <property type="entry name" value="Enolase"/>
</dbReference>
<dbReference type="InterPro" id="IPR036849">
    <property type="entry name" value="Enolase-like_C_sf"/>
</dbReference>
<dbReference type="InterPro" id="IPR029017">
    <property type="entry name" value="Enolase-like_N"/>
</dbReference>
<dbReference type="InterPro" id="IPR020810">
    <property type="entry name" value="Enolase_C"/>
</dbReference>
<dbReference type="InterPro" id="IPR020809">
    <property type="entry name" value="Enolase_CS"/>
</dbReference>
<dbReference type="InterPro" id="IPR020811">
    <property type="entry name" value="Enolase_N"/>
</dbReference>
<dbReference type="NCBIfam" id="TIGR01060">
    <property type="entry name" value="eno"/>
    <property type="match status" value="1"/>
</dbReference>
<dbReference type="PANTHER" id="PTHR11902">
    <property type="entry name" value="ENOLASE"/>
    <property type="match status" value="1"/>
</dbReference>
<dbReference type="PANTHER" id="PTHR11902:SF1">
    <property type="entry name" value="ENOLASE"/>
    <property type="match status" value="1"/>
</dbReference>
<dbReference type="Pfam" id="PF00113">
    <property type="entry name" value="Enolase_C"/>
    <property type="match status" value="1"/>
</dbReference>
<dbReference type="Pfam" id="PF03952">
    <property type="entry name" value="Enolase_N"/>
    <property type="match status" value="1"/>
</dbReference>
<dbReference type="PIRSF" id="PIRSF001400">
    <property type="entry name" value="Enolase"/>
    <property type="match status" value="1"/>
</dbReference>
<dbReference type="PRINTS" id="PR00148">
    <property type="entry name" value="ENOLASE"/>
</dbReference>
<dbReference type="SFLD" id="SFLDS00001">
    <property type="entry name" value="Enolase"/>
    <property type="match status" value="1"/>
</dbReference>
<dbReference type="SFLD" id="SFLDF00002">
    <property type="entry name" value="enolase"/>
    <property type="match status" value="1"/>
</dbReference>
<dbReference type="SMART" id="SM01192">
    <property type="entry name" value="Enolase_C"/>
    <property type="match status" value="1"/>
</dbReference>
<dbReference type="SMART" id="SM01193">
    <property type="entry name" value="Enolase_N"/>
    <property type="match status" value="1"/>
</dbReference>
<dbReference type="SUPFAM" id="SSF51604">
    <property type="entry name" value="Enolase C-terminal domain-like"/>
    <property type="match status" value="1"/>
</dbReference>
<dbReference type="SUPFAM" id="SSF54826">
    <property type="entry name" value="Enolase N-terminal domain-like"/>
    <property type="match status" value="1"/>
</dbReference>
<dbReference type="PROSITE" id="PS00164">
    <property type="entry name" value="ENOLASE"/>
    <property type="match status" value="1"/>
</dbReference>
<feature type="initiator methionine" description="Removed" evidence="3 4">
    <location>
        <position position="1"/>
    </location>
</feature>
<feature type="chain" id="PRO_0000134063" description="Enolase 2">
    <location>
        <begin position="2"/>
        <end position="437"/>
    </location>
</feature>
<feature type="active site" evidence="1">
    <location>
        <position position="160"/>
    </location>
</feature>
<feature type="binding site" evidence="1">
    <location>
        <position position="247"/>
    </location>
    <ligand>
        <name>Mg(2+)</name>
        <dbReference type="ChEBI" id="CHEBI:18420"/>
    </ligand>
</feature>
<feature type="binding site" evidence="1">
    <location>
        <position position="296"/>
    </location>
    <ligand>
        <name>Mg(2+)</name>
        <dbReference type="ChEBI" id="CHEBI:18420"/>
    </ligand>
</feature>
<feature type="binding site" evidence="1">
    <location>
        <position position="321"/>
    </location>
    <ligand>
        <name>Mg(2+)</name>
        <dbReference type="ChEBI" id="CHEBI:18420"/>
    </ligand>
</feature>
<feature type="modified residue" description="Phosphoserine" evidence="8">
    <location>
        <position position="138"/>
    </location>
</feature>
<feature type="modified residue" description="Phosphoserine" evidence="6">
    <location>
        <position position="188"/>
    </location>
</feature>
<feature type="modified residue" description="Phosphothreonine" evidence="8">
    <location>
        <position position="313"/>
    </location>
</feature>
<feature type="modified residue" description="Phosphothreonine" evidence="7">
    <location>
        <position position="324"/>
    </location>
</feature>
<feature type="cross-link" description="Glycyl lysine isopeptide (Lys-Gly) (interchain with G-Cter in ubiquitin)" evidence="9">
    <location>
        <position position="60"/>
    </location>
</feature>
<feature type="cross-link" description="Glycyl lysine isopeptide (Lys-Gly) (interchain with G-Cter in ubiquitin)" evidence="9">
    <location>
        <position position="243"/>
    </location>
</feature>
<feature type="cross-link" description="Glycyl lysine isopeptide (Lys-Gly) (interchain with G-Cter in ubiquitin)" evidence="9">
    <location>
        <position position="358"/>
    </location>
</feature>
<protein>
    <recommendedName>
        <fullName>Enolase 2</fullName>
        <ecNumber>4.2.1.11</ecNumber>
    </recommendedName>
    <alternativeName>
        <fullName>2-phospho-D-glycerate hydro-lyase 2</fullName>
    </alternativeName>
    <alternativeName>
        <fullName>2-phosphoglycerate dehydratase 2</fullName>
    </alternativeName>
</protein>